<feature type="chain" id="PRO_0000184264" description="Ribosomal RNA small subunit methyltransferase G">
    <location>
        <begin position="1"/>
        <end position="178"/>
    </location>
</feature>
<feature type="binding site" evidence="1">
    <location>
        <position position="54"/>
    </location>
    <ligand>
        <name>S-adenosyl-L-methionine</name>
        <dbReference type="ChEBI" id="CHEBI:59789"/>
    </ligand>
</feature>
<feature type="binding site" evidence="1">
    <location>
        <position position="59"/>
    </location>
    <ligand>
        <name>S-adenosyl-L-methionine</name>
        <dbReference type="ChEBI" id="CHEBI:59789"/>
    </ligand>
</feature>
<feature type="binding site" evidence="1">
    <location>
        <begin position="105"/>
        <end position="106"/>
    </location>
    <ligand>
        <name>S-adenosyl-L-methionine</name>
        <dbReference type="ChEBI" id="CHEBI:59789"/>
    </ligand>
</feature>
<feature type="binding site" evidence="1">
    <location>
        <position position="120"/>
    </location>
    <ligand>
        <name>S-adenosyl-L-methionine</name>
        <dbReference type="ChEBI" id="CHEBI:59789"/>
    </ligand>
</feature>
<evidence type="ECO:0000255" key="1">
    <source>
        <dbReference type="HAMAP-Rule" id="MF_00074"/>
    </source>
</evidence>
<gene>
    <name evidence="1" type="primary">rsmG</name>
    <name type="ordered locus">jhp_0362</name>
</gene>
<name>RSMG_HELPJ</name>
<sequence length="178" mass="20580">MNPLLQDYARILLEWNQTHNLSGARNLSELEPQITDALKPLEFVKDFKSCLDIGSGAGLPAIPLALEKPEAQFILLEPRVKRAAFLNYLKSVLPLNNIEIIKKRLEDYQNLLQVDLITSRAVASSSFLIEKSQRFLKDKGYFLFYKGEQLKNEIAYKTTECFMHQKRVYFYKSKESLC</sequence>
<comment type="function">
    <text evidence="1">Specifically methylates the N7 position of guanine in position 527 of 16S rRNA.</text>
</comment>
<comment type="catalytic activity">
    <reaction evidence="1">
        <text>guanosine(527) in 16S rRNA + S-adenosyl-L-methionine = N(7)-methylguanosine(527) in 16S rRNA + S-adenosyl-L-homocysteine</text>
        <dbReference type="Rhea" id="RHEA:42732"/>
        <dbReference type="Rhea" id="RHEA-COMP:10209"/>
        <dbReference type="Rhea" id="RHEA-COMP:10210"/>
        <dbReference type="ChEBI" id="CHEBI:57856"/>
        <dbReference type="ChEBI" id="CHEBI:59789"/>
        <dbReference type="ChEBI" id="CHEBI:74269"/>
        <dbReference type="ChEBI" id="CHEBI:74480"/>
        <dbReference type="EC" id="2.1.1.170"/>
    </reaction>
</comment>
<comment type="subcellular location">
    <subcellularLocation>
        <location evidence="1">Cytoplasm</location>
    </subcellularLocation>
</comment>
<comment type="similarity">
    <text evidence="1">Belongs to the methyltransferase superfamily. RNA methyltransferase RsmG family.</text>
</comment>
<proteinExistence type="inferred from homology"/>
<protein>
    <recommendedName>
        <fullName evidence="1">Ribosomal RNA small subunit methyltransferase G</fullName>
        <ecNumber evidence="1">2.1.1.170</ecNumber>
    </recommendedName>
    <alternativeName>
        <fullName evidence="1">16S rRNA 7-methylguanosine methyltransferase</fullName>
        <shortName evidence="1">16S rRNA m7G methyltransferase</shortName>
    </alternativeName>
</protein>
<accession>Q9ZM61</accession>
<keyword id="KW-0963">Cytoplasm</keyword>
<keyword id="KW-0489">Methyltransferase</keyword>
<keyword id="KW-0698">rRNA processing</keyword>
<keyword id="KW-0949">S-adenosyl-L-methionine</keyword>
<keyword id="KW-0808">Transferase</keyword>
<organism>
    <name type="scientific">Helicobacter pylori (strain J99 / ATCC 700824)</name>
    <name type="common">Campylobacter pylori J99</name>
    <dbReference type="NCBI Taxonomy" id="85963"/>
    <lineage>
        <taxon>Bacteria</taxon>
        <taxon>Pseudomonadati</taxon>
        <taxon>Campylobacterota</taxon>
        <taxon>Epsilonproteobacteria</taxon>
        <taxon>Campylobacterales</taxon>
        <taxon>Helicobacteraceae</taxon>
        <taxon>Helicobacter</taxon>
    </lineage>
</organism>
<reference key="1">
    <citation type="journal article" date="1999" name="Nature">
        <title>Genomic sequence comparison of two unrelated isolates of the human gastric pathogen Helicobacter pylori.</title>
        <authorList>
            <person name="Alm R.A."/>
            <person name="Ling L.-S.L."/>
            <person name="Moir D.T."/>
            <person name="King B.L."/>
            <person name="Brown E.D."/>
            <person name="Doig P.C."/>
            <person name="Smith D.R."/>
            <person name="Noonan B."/>
            <person name="Guild B.C."/>
            <person name="deJonge B.L."/>
            <person name="Carmel G."/>
            <person name="Tummino P.J."/>
            <person name="Caruso A."/>
            <person name="Uria-Nickelsen M."/>
            <person name="Mills D.M."/>
            <person name="Ives C."/>
            <person name="Gibson R."/>
            <person name="Merberg D."/>
            <person name="Mills S.D."/>
            <person name="Jiang Q."/>
            <person name="Taylor D.E."/>
            <person name="Vovis G.F."/>
            <person name="Trust T.J."/>
        </authorList>
    </citation>
    <scope>NUCLEOTIDE SEQUENCE [LARGE SCALE GENOMIC DNA]</scope>
    <source>
        <strain>J99 / ATCC 700824</strain>
    </source>
</reference>
<dbReference type="EC" id="2.1.1.170" evidence="1"/>
<dbReference type="EMBL" id="AE001439">
    <property type="protein sequence ID" value="AAD05942.1"/>
    <property type="molecule type" value="Genomic_DNA"/>
</dbReference>
<dbReference type="PIR" id="B71942">
    <property type="entry name" value="B71942"/>
</dbReference>
<dbReference type="RefSeq" id="WP_001068880.1">
    <property type="nucleotide sequence ID" value="NC_000921.1"/>
</dbReference>
<dbReference type="SMR" id="Q9ZM61"/>
<dbReference type="KEGG" id="hpj:jhp_0362"/>
<dbReference type="PATRIC" id="fig|85963.30.peg.649"/>
<dbReference type="eggNOG" id="COG0357">
    <property type="taxonomic scope" value="Bacteria"/>
</dbReference>
<dbReference type="Proteomes" id="UP000000804">
    <property type="component" value="Chromosome"/>
</dbReference>
<dbReference type="GO" id="GO:0005829">
    <property type="term" value="C:cytosol"/>
    <property type="evidence" value="ECO:0007669"/>
    <property type="project" value="TreeGrafter"/>
</dbReference>
<dbReference type="GO" id="GO:0070043">
    <property type="term" value="F:rRNA (guanine-N7-)-methyltransferase activity"/>
    <property type="evidence" value="ECO:0007669"/>
    <property type="project" value="UniProtKB-UniRule"/>
</dbReference>
<dbReference type="CDD" id="cd02440">
    <property type="entry name" value="AdoMet_MTases"/>
    <property type="match status" value="1"/>
</dbReference>
<dbReference type="FunFam" id="3.40.50.150:FF:000511">
    <property type="entry name" value="Ribosomal RNA small subunit methyltransferase G"/>
    <property type="match status" value="1"/>
</dbReference>
<dbReference type="Gene3D" id="3.40.50.150">
    <property type="entry name" value="Vaccinia Virus protein VP39"/>
    <property type="match status" value="1"/>
</dbReference>
<dbReference type="HAMAP" id="MF_00074">
    <property type="entry name" value="16SrRNA_methyltr_G"/>
    <property type="match status" value="1"/>
</dbReference>
<dbReference type="InterPro" id="IPR003682">
    <property type="entry name" value="rRNA_ssu_MeTfrase_G"/>
</dbReference>
<dbReference type="InterPro" id="IPR029063">
    <property type="entry name" value="SAM-dependent_MTases_sf"/>
</dbReference>
<dbReference type="NCBIfam" id="TIGR00138">
    <property type="entry name" value="rsmG_gidB"/>
    <property type="match status" value="1"/>
</dbReference>
<dbReference type="PANTHER" id="PTHR31760">
    <property type="entry name" value="S-ADENOSYL-L-METHIONINE-DEPENDENT METHYLTRANSFERASES SUPERFAMILY PROTEIN"/>
    <property type="match status" value="1"/>
</dbReference>
<dbReference type="PANTHER" id="PTHR31760:SF0">
    <property type="entry name" value="S-ADENOSYL-L-METHIONINE-DEPENDENT METHYLTRANSFERASES SUPERFAMILY PROTEIN"/>
    <property type="match status" value="1"/>
</dbReference>
<dbReference type="Pfam" id="PF02527">
    <property type="entry name" value="GidB"/>
    <property type="match status" value="1"/>
</dbReference>
<dbReference type="PIRSF" id="PIRSF003078">
    <property type="entry name" value="GidB"/>
    <property type="match status" value="1"/>
</dbReference>
<dbReference type="SUPFAM" id="SSF53335">
    <property type="entry name" value="S-adenosyl-L-methionine-dependent methyltransferases"/>
    <property type="match status" value="1"/>
</dbReference>